<feature type="chain" id="PRO_1000185907" description="Pyridoxal 5'-phosphate synthase subunit PdxT">
    <location>
        <begin position="1"/>
        <end position="193"/>
    </location>
</feature>
<feature type="active site" description="Nucleophile" evidence="1">
    <location>
        <position position="82"/>
    </location>
</feature>
<feature type="active site" description="Charge relay system" evidence="1">
    <location>
        <position position="172"/>
    </location>
</feature>
<feature type="active site" description="Charge relay system" evidence="1">
    <location>
        <position position="174"/>
    </location>
</feature>
<feature type="binding site" evidence="1">
    <location>
        <begin position="50"/>
        <end position="52"/>
    </location>
    <ligand>
        <name>L-glutamine</name>
        <dbReference type="ChEBI" id="CHEBI:58359"/>
    </ligand>
</feature>
<feature type="binding site" evidence="1">
    <location>
        <position position="109"/>
    </location>
    <ligand>
        <name>L-glutamine</name>
        <dbReference type="ChEBI" id="CHEBI:58359"/>
    </ligand>
</feature>
<feature type="binding site" evidence="1">
    <location>
        <begin position="136"/>
        <end position="137"/>
    </location>
    <ligand>
        <name>L-glutamine</name>
        <dbReference type="ChEBI" id="CHEBI:58359"/>
    </ligand>
</feature>
<reference key="1">
    <citation type="journal article" date="2010" name="Genome Biol.">
        <title>Structure and dynamics of the pan-genome of Streptococcus pneumoniae and closely related species.</title>
        <authorList>
            <person name="Donati C."/>
            <person name="Hiller N.L."/>
            <person name="Tettelin H."/>
            <person name="Muzzi A."/>
            <person name="Croucher N.J."/>
            <person name="Angiuoli S.V."/>
            <person name="Oggioni M."/>
            <person name="Dunning Hotopp J.C."/>
            <person name="Hu F.Z."/>
            <person name="Riley D.R."/>
            <person name="Covacci A."/>
            <person name="Mitchell T.J."/>
            <person name="Bentley S.D."/>
            <person name="Kilian M."/>
            <person name="Ehrlich G.D."/>
            <person name="Rappuoli R."/>
            <person name="Moxon E.R."/>
            <person name="Masignani V."/>
        </authorList>
    </citation>
    <scope>NUCLEOTIDE SEQUENCE [LARGE SCALE GENOMIC DNA]</scope>
    <source>
        <strain>Taiwan19F-14</strain>
    </source>
</reference>
<organism>
    <name type="scientific">Streptococcus pneumoniae (strain Taiwan19F-14)</name>
    <dbReference type="NCBI Taxonomy" id="487213"/>
    <lineage>
        <taxon>Bacteria</taxon>
        <taxon>Bacillati</taxon>
        <taxon>Bacillota</taxon>
        <taxon>Bacilli</taxon>
        <taxon>Lactobacillales</taxon>
        <taxon>Streptococcaceae</taxon>
        <taxon>Streptococcus</taxon>
    </lineage>
</organism>
<keyword id="KW-0315">Glutamine amidotransferase</keyword>
<keyword id="KW-0378">Hydrolase</keyword>
<keyword id="KW-0456">Lyase</keyword>
<keyword id="KW-0663">Pyridoxal phosphate</keyword>
<protein>
    <recommendedName>
        <fullName evidence="1">Pyridoxal 5'-phosphate synthase subunit PdxT</fullName>
        <ecNumber evidence="1">4.3.3.6</ecNumber>
    </recommendedName>
    <alternativeName>
        <fullName evidence="1">Pdx2</fullName>
    </alternativeName>
    <alternativeName>
        <fullName evidence="1">Pyridoxal 5'-phosphate synthase glutaminase subunit</fullName>
        <ecNumber evidence="1">3.5.1.2</ecNumber>
    </alternativeName>
</protein>
<accession>C1CQQ1</accession>
<sequence length="193" mass="21094">MKIGILALQGAFAEHAKVLDQLGVESVELRNLDDFQQDQSDLSGLILPGGESTTMGKLLRDQNMLLPIREAILSGLPVFGTCAGLILLAKEITSQKESHLGTMDMVVERNAYGRQLGSFYTEAECKGVGKIPMTFIRGPIISSVGEGVEILATVNNQIVAAQEKNMLVSSFHPELTDDVRLHQYFINMCKEKS</sequence>
<gene>
    <name evidence="1" type="primary">pdxT</name>
    <name type="ordered locus">SPT_0808</name>
</gene>
<name>PDXT_STRZT</name>
<comment type="function">
    <text evidence="1">Catalyzes the hydrolysis of glutamine to glutamate and ammonia as part of the biosynthesis of pyridoxal 5'-phosphate. The resulting ammonia molecule is channeled to the active site of PdxS.</text>
</comment>
<comment type="catalytic activity">
    <reaction evidence="1">
        <text>aldehydo-D-ribose 5-phosphate + D-glyceraldehyde 3-phosphate + L-glutamine = pyridoxal 5'-phosphate + L-glutamate + phosphate + 3 H2O + H(+)</text>
        <dbReference type="Rhea" id="RHEA:31507"/>
        <dbReference type="ChEBI" id="CHEBI:15377"/>
        <dbReference type="ChEBI" id="CHEBI:15378"/>
        <dbReference type="ChEBI" id="CHEBI:29985"/>
        <dbReference type="ChEBI" id="CHEBI:43474"/>
        <dbReference type="ChEBI" id="CHEBI:58273"/>
        <dbReference type="ChEBI" id="CHEBI:58359"/>
        <dbReference type="ChEBI" id="CHEBI:59776"/>
        <dbReference type="ChEBI" id="CHEBI:597326"/>
        <dbReference type="EC" id="4.3.3.6"/>
    </reaction>
</comment>
<comment type="catalytic activity">
    <reaction evidence="1">
        <text>L-glutamine + H2O = L-glutamate + NH4(+)</text>
        <dbReference type="Rhea" id="RHEA:15889"/>
        <dbReference type="ChEBI" id="CHEBI:15377"/>
        <dbReference type="ChEBI" id="CHEBI:28938"/>
        <dbReference type="ChEBI" id="CHEBI:29985"/>
        <dbReference type="ChEBI" id="CHEBI:58359"/>
        <dbReference type="EC" id="3.5.1.2"/>
    </reaction>
</comment>
<comment type="pathway">
    <text evidence="1">Cofactor biosynthesis; pyridoxal 5'-phosphate biosynthesis.</text>
</comment>
<comment type="subunit">
    <text evidence="1">In the presence of PdxS, forms a dodecamer of heterodimers. Only shows activity in the heterodimer.</text>
</comment>
<comment type="similarity">
    <text evidence="1">Belongs to the glutaminase PdxT/SNO family.</text>
</comment>
<dbReference type="EC" id="4.3.3.6" evidence="1"/>
<dbReference type="EC" id="3.5.1.2" evidence="1"/>
<dbReference type="EMBL" id="CP000921">
    <property type="protein sequence ID" value="ACO23310.1"/>
    <property type="molecule type" value="Genomic_DNA"/>
</dbReference>
<dbReference type="RefSeq" id="WP_000689945.1">
    <property type="nucleotide sequence ID" value="NC_012469.1"/>
</dbReference>
<dbReference type="SMR" id="C1CQQ1"/>
<dbReference type="MEROPS" id="C26.A32"/>
<dbReference type="GeneID" id="45653283"/>
<dbReference type="KEGG" id="snt:SPT_0808"/>
<dbReference type="HOGENOM" id="CLU_069674_2_0_9"/>
<dbReference type="UniPathway" id="UPA00245"/>
<dbReference type="GO" id="GO:0005829">
    <property type="term" value="C:cytosol"/>
    <property type="evidence" value="ECO:0007669"/>
    <property type="project" value="TreeGrafter"/>
</dbReference>
<dbReference type="GO" id="GO:1903600">
    <property type="term" value="C:glutaminase complex"/>
    <property type="evidence" value="ECO:0007669"/>
    <property type="project" value="TreeGrafter"/>
</dbReference>
<dbReference type="GO" id="GO:0004359">
    <property type="term" value="F:glutaminase activity"/>
    <property type="evidence" value="ECO:0007669"/>
    <property type="project" value="UniProtKB-UniRule"/>
</dbReference>
<dbReference type="GO" id="GO:0036381">
    <property type="term" value="F:pyridoxal 5'-phosphate synthase (glutamine hydrolysing) activity"/>
    <property type="evidence" value="ECO:0007669"/>
    <property type="project" value="UniProtKB-UniRule"/>
</dbReference>
<dbReference type="GO" id="GO:0006543">
    <property type="term" value="P:glutamine catabolic process"/>
    <property type="evidence" value="ECO:0007669"/>
    <property type="project" value="UniProtKB-UniRule"/>
</dbReference>
<dbReference type="GO" id="GO:0042823">
    <property type="term" value="P:pyridoxal phosphate biosynthetic process"/>
    <property type="evidence" value="ECO:0007669"/>
    <property type="project" value="UniProtKB-UniRule"/>
</dbReference>
<dbReference type="GO" id="GO:0008614">
    <property type="term" value="P:pyridoxine metabolic process"/>
    <property type="evidence" value="ECO:0007669"/>
    <property type="project" value="TreeGrafter"/>
</dbReference>
<dbReference type="CDD" id="cd01749">
    <property type="entry name" value="GATase1_PB"/>
    <property type="match status" value="1"/>
</dbReference>
<dbReference type="FunFam" id="3.40.50.880:FF:000010">
    <property type="entry name" value="uncharacterized protein LOC100176842 isoform X2"/>
    <property type="match status" value="1"/>
</dbReference>
<dbReference type="Gene3D" id="3.40.50.880">
    <property type="match status" value="1"/>
</dbReference>
<dbReference type="HAMAP" id="MF_01615">
    <property type="entry name" value="PdxT"/>
    <property type="match status" value="1"/>
</dbReference>
<dbReference type="InterPro" id="IPR029062">
    <property type="entry name" value="Class_I_gatase-like"/>
</dbReference>
<dbReference type="InterPro" id="IPR002161">
    <property type="entry name" value="PdxT/SNO"/>
</dbReference>
<dbReference type="InterPro" id="IPR021196">
    <property type="entry name" value="PdxT/SNO_CS"/>
</dbReference>
<dbReference type="NCBIfam" id="TIGR03800">
    <property type="entry name" value="PLP_synth_Pdx2"/>
    <property type="match status" value="1"/>
</dbReference>
<dbReference type="PANTHER" id="PTHR31559">
    <property type="entry name" value="PYRIDOXAL 5'-PHOSPHATE SYNTHASE SUBUNIT SNO"/>
    <property type="match status" value="1"/>
</dbReference>
<dbReference type="PANTHER" id="PTHR31559:SF0">
    <property type="entry name" value="PYRIDOXAL 5'-PHOSPHATE SYNTHASE SUBUNIT SNO1-RELATED"/>
    <property type="match status" value="1"/>
</dbReference>
<dbReference type="Pfam" id="PF01174">
    <property type="entry name" value="SNO"/>
    <property type="match status" value="1"/>
</dbReference>
<dbReference type="PIRSF" id="PIRSF005639">
    <property type="entry name" value="Glut_amidoT_SNO"/>
    <property type="match status" value="1"/>
</dbReference>
<dbReference type="SUPFAM" id="SSF52317">
    <property type="entry name" value="Class I glutamine amidotransferase-like"/>
    <property type="match status" value="1"/>
</dbReference>
<dbReference type="PROSITE" id="PS01236">
    <property type="entry name" value="PDXT_SNO_1"/>
    <property type="match status" value="1"/>
</dbReference>
<dbReference type="PROSITE" id="PS51130">
    <property type="entry name" value="PDXT_SNO_2"/>
    <property type="match status" value="1"/>
</dbReference>
<proteinExistence type="inferred from homology"/>
<evidence type="ECO:0000255" key="1">
    <source>
        <dbReference type="HAMAP-Rule" id="MF_01615"/>
    </source>
</evidence>